<reference key="1">
    <citation type="submission" date="2009-03" db="EMBL/GenBank/DDBJ databases">
        <title>Complete genome sequence of Edwardsiella ictaluri 93-146.</title>
        <authorList>
            <person name="Williams M.L."/>
            <person name="Gillaspy A.F."/>
            <person name="Dyer D.W."/>
            <person name="Thune R.L."/>
            <person name="Waldbieser G.C."/>
            <person name="Schuster S.C."/>
            <person name="Gipson J."/>
            <person name="Zaitshik J."/>
            <person name="Landry C."/>
            <person name="Lawrence M.L."/>
        </authorList>
    </citation>
    <scope>NUCLEOTIDE SEQUENCE [LARGE SCALE GENOMIC DNA]</scope>
    <source>
        <strain>93-146</strain>
    </source>
</reference>
<comment type="function">
    <text evidence="1">Member of a network of 50S ribosomal subunit biogenesis factors which assembles along the 30S-50S interface, preventing incorrect 23S rRNA structures from forming. Promotes peptidyl transferase center (PTC) maturation.</text>
</comment>
<comment type="subcellular location">
    <subcellularLocation>
        <location evidence="1">Cytoplasm</location>
    </subcellularLocation>
    <text evidence="1">Associates with late stage pre-50S ribosomal subunits.</text>
</comment>
<comment type="similarity">
    <text evidence="1">Belongs to the DarP family.</text>
</comment>
<name>DARP_EDWI9</name>
<accession>C5BAW4</accession>
<dbReference type="EMBL" id="CP001600">
    <property type="protein sequence ID" value="ACR70519.1"/>
    <property type="molecule type" value="Genomic_DNA"/>
</dbReference>
<dbReference type="SMR" id="C5BAW4"/>
<dbReference type="STRING" id="67780.B6E78_08590"/>
<dbReference type="KEGG" id="eic:NT01EI_3382"/>
<dbReference type="PATRIC" id="fig|634503.3.peg.3005"/>
<dbReference type="HOGENOM" id="CLU_106757_2_0_6"/>
<dbReference type="OrthoDB" id="5293604at2"/>
<dbReference type="Proteomes" id="UP000001485">
    <property type="component" value="Chromosome"/>
</dbReference>
<dbReference type="GO" id="GO:0005829">
    <property type="term" value="C:cytosol"/>
    <property type="evidence" value="ECO:0007669"/>
    <property type="project" value="TreeGrafter"/>
</dbReference>
<dbReference type="GO" id="GO:0043022">
    <property type="term" value="F:ribosome binding"/>
    <property type="evidence" value="ECO:0007669"/>
    <property type="project" value="UniProtKB-UniRule"/>
</dbReference>
<dbReference type="GO" id="GO:0019843">
    <property type="term" value="F:rRNA binding"/>
    <property type="evidence" value="ECO:0007669"/>
    <property type="project" value="UniProtKB-UniRule"/>
</dbReference>
<dbReference type="GO" id="GO:1902626">
    <property type="term" value="P:assembly of large subunit precursor of preribosome"/>
    <property type="evidence" value="ECO:0007669"/>
    <property type="project" value="UniProtKB-UniRule"/>
</dbReference>
<dbReference type="CDD" id="cd16331">
    <property type="entry name" value="YjgA-like"/>
    <property type="match status" value="1"/>
</dbReference>
<dbReference type="FunFam" id="1.10.60.30:FF:000001">
    <property type="entry name" value="UPF0307 protein YjgA"/>
    <property type="match status" value="1"/>
</dbReference>
<dbReference type="FunFam" id="1.10.60.30:FF:000002">
    <property type="entry name" value="UPF0307 protein YjgA"/>
    <property type="match status" value="1"/>
</dbReference>
<dbReference type="Gene3D" id="1.10.60.30">
    <property type="entry name" value="PSPTO4464-like domains"/>
    <property type="match status" value="2"/>
</dbReference>
<dbReference type="HAMAP" id="MF_00765">
    <property type="entry name" value="DarP"/>
    <property type="match status" value="1"/>
</dbReference>
<dbReference type="InterPro" id="IPR006839">
    <property type="entry name" value="DarP"/>
</dbReference>
<dbReference type="InterPro" id="IPR023153">
    <property type="entry name" value="DarP_sf"/>
</dbReference>
<dbReference type="NCBIfam" id="NF003593">
    <property type="entry name" value="PRK05255.1-1"/>
    <property type="match status" value="1"/>
</dbReference>
<dbReference type="PANTHER" id="PTHR38101">
    <property type="entry name" value="UPF0307 PROTEIN YJGA"/>
    <property type="match status" value="1"/>
</dbReference>
<dbReference type="PANTHER" id="PTHR38101:SF1">
    <property type="entry name" value="UPF0307 PROTEIN YJGA"/>
    <property type="match status" value="1"/>
</dbReference>
<dbReference type="Pfam" id="PF04751">
    <property type="entry name" value="DarP"/>
    <property type="match status" value="1"/>
</dbReference>
<dbReference type="PIRSF" id="PIRSF016183">
    <property type="entry name" value="UCP016183"/>
    <property type="match status" value="1"/>
</dbReference>
<dbReference type="SUPFAM" id="SSF158710">
    <property type="entry name" value="PSPTO4464-like"/>
    <property type="match status" value="1"/>
</dbReference>
<gene>
    <name evidence="1" type="primary">darP</name>
    <name type="ordered locus">NT01EI_3382</name>
</gene>
<evidence type="ECO:0000255" key="1">
    <source>
        <dbReference type="HAMAP-Rule" id="MF_00765"/>
    </source>
</evidence>
<evidence type="ECO:0000256" key="2">
    <source>
        <dbReference type="SAM" id="MobiDB-lite"/>
    </source>
</evidence>
<organism>
    <name type="scientific">Edwardsiella ictaluri (strain 93-146)</name>
    <dbReference type="NCBI Taxonomy" id="634503"/>
    <lineage>
        <taxon>Bacteria</taxon>
        <taxon>Pseudomonadati</taxon>
        <taxon>Pseudomonadota</taxon>
        <taxon>Gammaproteobacteria</taxon>
        <taxon>Enterobacterales</taxon>
        <taxon>Hafniaceae</taxon>
        <taxon>Edwardsiella</taxon>
    </lineage>
</organism>
<protein>
    <recommendedName>
        <fullName evidence="1">Dual-action ribosomal maturation protein DarP</fullName>
    </recommendedName>
    <alternativeName>
        <fullName evidence="1">Large ribosomal subunit assembly factor DarP</fullName>
    </alternativeName>
</protein>
<proteinExistence type="inferred from homology"/>
<feature type="chain" id="PRO_1000212889" description="Dual-action ribosomal maturation protein DarP">
    <location>
        <begin position="1"/>
        <end position="184"/>
    </location>
</feature>
<feature type="region of interest" description="Disordered" evidence="2">
    <location>
        <begin position="1"/>
        <end position="21"/>
    </location>
</feature>
<sequence>MYKHPDEEWLDEIPGQQENEDDDEIIWVSKSEIKRDAEALKALGAELVDLGKNALDRIPLDEDLRAAIELAQRIKKEGRRRQLQLIGKLLRQRDPEPIQTALDKLKNRHNQQVALFHKLEQLRDRLISDGDEAISEVLNLYPHADRQQLRALIRNAKKERDGNKPPKSARQIFQYLRTLAEAND</sequence>
<keyword id="KW-0963">Cytoplasm</keyword>
<keyword id="KW-0690">Ribosome biogenesis</keyword>
<keyword id="KW-0694">RNA-binding</keyword>
<keyword id="KW-0699">rRNA-binding</keyword>